<proteinExistence type="inferred from homology"/>
<reference key="1">
    <citation type="journal article" date="2009" name="Proc. Natl. Acad. Sci. U.S.A.">
        <title>Hamiltonella defensa, genome evolution of protective bacterial endosymbiont from pathogenic ancestors.</title>
        <authorList>
            <person name="Degnan P.H."/>
            <person name="Yu Y."/>
            <person name="Sisneros N."/>
            <person name="Wing R.A."/>
            <person name="Moran N.A."/>
        </authorList>
    </citation>
    <scope>NUCLEOTIDE SEQUENCE [LARGE SCALE GENOMIC DNA]</scope>
    <source>
        <strain>5AT</strain>
    </source>
</reference>
<gene>
    <name evidence="1" type="primary">purA</name>
    <name type="ordered locus">HDEF_0302</name>
</gene>
<sequence length="436" mass="48275">MGKNIVVLGAQWGDEGKGKIVDLLTERAKYVVRYQGGHNAGHTLISKGKKTVLHLIPSGILRNNTINIIGNGVVLEPHALIKEIKELEMQGVPVRNRLLLSAACPLILPYHVALDNEREKARGSKAIGTTGRGIGPAYEDKVARRALRLGDLFNQITFESQLKEVIEYHNFQLVHYYKAEPVHYQRVVESIWGIADILKNMVIDVTQVLSQAREKAENLLFEGAQGTFLDIDHGTYPYVTSSNTTAGSVATGAGFGPLYIDYILGIVKAYSTRVGAGPFPTELNDETGNFLRDKGHEYGATTGRSRRTGWLDAVSLRQAIQMNSLSGLCMTKLDVLDGLKTVKICVRYKRTDGTETMSTPITSAEWAEVEPIYEALPGWKESTFGIKEKSQLPQTALNYIKRVEELTGVPVDIISTGPDREETIILRHPFDEMIKK</sequence>
<protein>
    <recommendedName>
        <fullName evidence="1">Adenylosuccinate synthetase</fullName>
        <shortName evidence="1">AMPSase</shortName>
        <shortName evidence="1">AdSS</shortName>
        <ecNumber evidence="1">6.3.4.4</ecNumber>
    </recommendedName>
    <alternativeName>
        <fullName evidence="1">IMP--aspartate ligase</fullName>
    </alternativeName>
</protein>
<evidence type="ECO:0000255" key="1">
    <source>
        <dbReference type="HAMAP-Rule" id="MF_00011"/>
    </source>
</evidence>
<feature type="chain" id="PRO_1000201759" description="Adenylosuccinate synthetase">
    <location>
        <begin position="1"/>
        <end position="436"/>
    </location>
</feature>
<feature type="active site" description="Proton acceptor" evidence="1">
    <location>
        <position position="14"/>
    </location>
</feature>
<feature type="active site" description="Proton donor" evidence="1">
    <location>
        <position position="42"/>
    </location>
</feature>
<feature type="binding site" evidence="1">
    <location>
        <begin position="13"/>
        <end position="19"/>
    </location>
    <ligand>
        <name>GTP</name>
        <dbReference type="ChEBI" id="CHEBI:37565"/>
    </ligand>
</feature>
<feature type="binding site" description="in other chain" evidence="1">
    <location>
        <begin position="14"/>
        <end position="17"/>
    </location>
    <ligand>
        <name>IMP</name>
        <dbReference type="ChEBI" id="CHEBI:58053"/>
        <note>ligand shared between dimeric partners</note>
    </ligand>
</feature>
<feature type="binding site" evidence="1">
    <location>
        <position position="14"/>
    </location>
    <ligand>
        <name>Mg(2+)</name>
        <dbReference type="ChEBI" id="CHEBI:18420"/>
    </ligand>
</feature>
<feature type="binding site" description="in other chain" evidence="1">
    <location>
        <begin position="39"/>
        <end position="42"/>
    </location>
    <ligand>
        <name>IMP</name>
        <dbReference type="ChEBI" id="CHEBI:58053"/>
        <note>ligand shared between dimeric partners</note>
    </ligand>
</feature>
<feature type="binding site" evidence="1">
    <location>
        <begin position="41"/>
        <end position="43"/>
    </location>
    <ligand>
        <name>GTP</name>
        <dbReference type="ChEBI" id="CHEBI:37565"/>
    </ligand>
</feature>
<feature type="binding site" evidence="1">
    <location>
        <position position="41"/>
    </location>
    <ligand>
        <name>Mg(2+)</name>
        <dbReference type="ChEBI" id="CHEBI:18420"/>
    </ligand>
</feature>
<feature type="binding site" description="in other chain" evidence="1">
    <location>
        <position position="130"/>
    </location>
    <ligand>
        <name>IMP</name>
        <dbReference type="ChEBI" id="CHEBI:58053"/>
        <note>ligand shared between dimeric partners</note>
    </ligand>
</feature>
<feature type="binding site" evidence="1">
    <location>
        <position position="144"/>
    </location>
    <ligand>
        <name>IMP</name>
        <dbReference type="ChEBI" id="CHEBI:58053"/>
        <note>ligand shared between dimeric partners</note>
    </ligand>
</feature>
<feature type="binding site" description="in other chain" evidence="1">
    <location>
        <position position="225"/>
    </location>
    <ligand>
        <name>IMP</name>
        <dbReference type="ChEBI" id="CHEBI:58053"/>
        <note>ligand shared between dimeric partners</note>
    </ligand>
</feature>
<feature type="binding site" description="in other chain" evidence="1">
    <location>
        <position position="240"/>
    </location>
    <ligand>
        <name>IMP</name>
        <dbReference type="ChEBI" id="CHEBI:58053"/>
        <note>ligand shared between dimeric partners</note>
    </ligand>
</feature>
<feature type="binding site" evidence="1">
    <location>
        <begin position="300"/>
        <end position="306"/>
    </location>
    <ligand>
        <name>substrate</name>
    </ligand>
</feature>
<feature type="binding site" description="in other chain" evidence="1">
    <location>
        <position position="304"/>
    </location>
    <ligand>
        <name>IMP</name>
        <dbReference type="ChEBI" id="CHEBI:58053"/>
        <note>ligand shared between dimeric partners</note>
    </ligand>
</feature>
<feature type="binding site" evidence="1">
    <location>
        <position position="306"/>
    </location>
    <ligand>
        <name>GTP</name>
        <dbReference type="ChEBI" id="CHEBI:37565"/>
    </ligand>
</feature>
<feature type="binding site" evidence="1">
    <location>
        <begin position="332"/>
        <end position="334"/>
    </location>
    <ligand>
        <name>GTP</name>
        <dbReference type="ChEBI" id="CHEBI:37565"/>
    </ligand>
</feature>
<feature type="binding site" evidence="1">
    <location>
        <begin position="415"/>
        <end position="417"/>
    </location>
    <ligand>
        <name>GTP</name>
        <dbReference type="ChEBI" id="CHEBI:37565"/>
    </ligand>
</feature>
<dbReference type="EC" id="6.3.4.4" evidence="1"/>
<dbReference type="EMBL" id="CP001277">
    <property type="protein sequence ID" value="ACQ67065.1"/>
    <property type="molecule type" value="Genomic_DNA"/>
</dbReference>
<dbReference type="RefSeq" id="WP_012738026.1">
    <property type="nucleotide sequence ID" value="NC_012751.1"/>
</dbReference>
<dbReference type="SMR" id="C4K3C2"/>
<dbReference type="STRING" id="572265.HDEF_0302"/>
<dbReference type="GeneID" id="66260220"/>
<dbReference type="KEGG" id="hde:HDEF_0302"/>
<dbReference type="eggNOG" id="COG0104">
    <property type="taxonomic scope" value="Bacteria"/>
</dbReference>
<dbReference type="HOGENOM" id="CLU_029848_0_0_6"/>
<dbReference type="UniPathway" id="UPA00075">
    <property type="reaction ID" value="UER00335"/>
</dbReference>
<dbReference type="Proteomes" id="UP000002334">
    <property type="component" value="Chromosome"/>
</dbReference>
<dbReference type="GO" id="GO:0005737">
    <property type="term" value="C:cytoplasm"/>
    <property type="evidence" value="ECO:0007669"/>
    <property type="project" value="UniProtKB-SubCell"/>
</dbReference>
<dbReference type="GO" id="GO:0004019">
    <property type="term" value="F:adenylosuccinate synthase activity"/>
    <property type="evidence" value="ECO:0007669"/>
    <property type="project" value="UniProtKB-UniRule"/>
</dbReference>
<dbReference type="GO" id="GO:0005525">
    <property type="term" value="F:GTP binding"/>
    <property type="evidence" value="ECO:0007669"/>
    <property type="project" value="UniProtKB-UniRule"/>
</dbReference>
<dbReference type="GO" id="GO:0000287">
    <property type="term" value="F:magnesium ion binding"/>
    <property type="evidence" value="ECO:0007669"/>
    <property type="project" value="UniProtKB-UniRule"/>
</dbReference>
<dbReference type="GO" id="GO:0044208">
    <property type="term" value="P:'de novo' AMP biosynthetic process"/>
    <property type="evidence" value="ECO:0007669"/>
    <property type="project" value="UniProtKB-UniRule"/>
</dbReference>
<dbReference type="GO" id="GO:0046040">
    <property type="term" value="P:IMP metabolic process"/>
    <property type="evidence" value="ECO:0007669"/>
    <property type="project" value="TreeGrafter"/>
</dbReference>
<dbReference type="CDD" id="cd03108">
    <property type="entry name" value="AdSS"/>
    <property type="match status" value="1"/>
</dbReference>
<dbReference type="FunFam" id="1.10.300.10:FF:000001">
    <property type="entry name" value="Adenylosuccinate synthetase"/>
    <property type="match status" value="1"/>
</dbReference>
<dbReference type="FunFam" id="3.90.170.10:FF:000001">
    <property type="entry name" value="Adenylosuccinate synthetase"/>
    <property type="match status" value="1"/>
</dbReference>
<dbReference type="Gene3D" id="3.40.440.10">
    <property type="entry name" value="Adenylosuccinate Synthetase, subunit A, domain 1"/>
    <property type="match status" value="1"/>
</dbReference>
<dbReference type="Gene3D" id="1.10.300.10">
    <property type="entry name" value="Adenylosuccinate Synthetase, subunit A, domain 2"/>
    <property type="match status" value="1"/>
</dbReference>
<dbReference type="Gene3D" id="3.90.170.10">
    <property type="entry name" value="Adenylosuccinate Synthetase, subunit A, domain 3"/>
    <property type="match status" value="1"/>
</dbReference>
<dbReference type="HAMAP" id="MF_00011">
    <property type="entry name" value="Adenylosucc_synth"/>
    <property type="match status" value="1"/>
</dbReference>
<dbReference type="InterPro" id="IPR018220">
    <property type="entry name" value="Adenylosuccin_syn_GTP-bd"/>
</dbReference>
<dbReference type="InterPro" id="IPR033128">
    <property type="entry name" value="Adenylosuccin_syn_Lys_AS"/>
</dbReference>
<dbReference type="InterPro" id="IPR042109">
    <property type="entry name" value="Adenylosuccinate_synth_dom1"/>
</dbReference>
<dbReference type="InterPro" id="IPR042110">
    <property type="entry name" value="Adenylosuccinate_synth_dom2"/>
</dbReference>
<dbReference type="InterPro" id="IPR042111">
    <property type="entry name" value="Adenylosuccinate_synth_dom3"/>
</dbReference>
<dbReference type="InterPro" id="IPR001114">
    <property type="entry name" value="Adenylosuccinate_synthetase"/>
</dbReference>
<dbReference type="InterPro" id="IPR027417">
    <property type="entry name" value="P-loop_NTPase"/>
</dbReference>
<dbReference type="NCBIfam" id="NF002223">
    <property type="entry name" value="PRK01117.1"/>
    <property type="match status" value="1"/>
</dbReference>
<dbReference type="NCBIfam" id="TIGR00184">
    <property type="entry name" value="purA"/>
    <property type="match status" value="1"/>
</dbReference>
<dbReference type="PANTHER" id="PTHR11846">
    <property type="entry name" value="ADENYLOSUCCINATE SYNTHETASE"/>
    <property type="match status" value="1"/>
</dbReference>
<dbReference type="PANTHER" id="PTHR11846:SF0">
    <property type="entry name" value="ADENYLOSUCCINATE SYNTHETASE"/>
    <property type="match status" value="1"/>
</dbReference>
<dbReference type="Pfam" id="PF00709">
    <property type="entry name" value="Adenylsucc_synt"/>
    <property type="match status" value="1"/>
</dbReference>
<dbReference type="SMART" id="SM00788">
    <property type="entry name" value="Adenylsucc_synt"/>
    <property type="match status" value="1"/>
</dbReference>
<dbReference type="SUPFAM" id="SSF52540">
    <property type="entry name" value="P-loop containing nucleoside triphosphate hydrolases"/>
    <property type="match status" value="1"/>
</dbReference>
<dbReference type="PROSITE" id="PS01266">
    <property type="entry name" value="ADENYLOSUCCIN_SYN_1"/>
    <property type="match status" value="1"/>
</dbReference>
<dbReference type="PROSITE" id="PS00513">
    <property type="entry name" value="ADENYLOSUCCIN_SYN_2"/>
    <property type="match status" value="1"/>
</dbReference>
<name>PURA_HAMD5</name>
<keyword id="KW-0963">Cytoplasm</keyword>
<keyword id="KW-0342">GTP-binding</keyword>
<keyword id="KW-0436">Ligase</keyword>
<keyword id="KW-0460">Magnesium</keyword>
<keyword id="KW-0479">Metal-binding</keyword>
<keyword id="KW-0547">Nucleotide-binding</keyword>
<keyword id="KW-0658">Purine biosynthesis</keyword>
<organism>
    <name type="scientific">Hamiltonella defensa subsp. Acyrthosiphon pisum (strain 5AT)</name>
    <dbReference type="NCBI Taxonomy" id="572265"/>
    <lineage>
        <taxon>Bacteria</taxon>
        <taxon>Pseudomonadati</taxon>
        <taxon>Pseudomonadota</taxon>
        <taxon>Gammaproteobacteria</taxon>
        <taxon>Enterobacterales</taxon>
        <taxon>Enterobacteriaceae</taxon>
        <taxon>aphid secondary symbionts</taxon>
        <taxon>Candidatus Hamiltonella</taxon>
    </lineage>
</organism>
<accession>C4K3C2</accession>
<comment type="function">
    <text evidence="1">Plays an important role in the de novo pathway of purine nucleotide biosynthesis. Catalyzes the first committed step in the biosynthesis of AMP from IMP.</text>
</comment>
<comment type="catalytic activity">
    <reaction evidence="1">
        <text>IMP + L-aspartate + GTP = N(6)-(1,2-dicarboxyethyl)-AMP + GDP + phosphate + 2 H(+)</text>
        <dbReference type="Rhea" id="RHEA:15753"/>
        <dbReference type="ChEBI" id="CHEBI:15378"/>
        <dbReference type="ChEBI" id="CHEBI:29991"/>
        <dbReference type="ChEBI" id="CHEBI:37565"/>
        <dbReference type="ChEBI" id="CHEBI:43474"/>
        <dbReference type="ChEBI" id="CHEBI:57567"/>
        <dbReference type="ChEBI" id="CHEBI:58053"/>
        <dbReference type="ChEBI" id="CHEBI:58189"/>
        <dbReference type="EC" id="6.3.4.4"/>
    </reaction>
</comment>
<comment type="cofactor">
    <cofactor evidence="1">
        <name>Mg(2+)</name>
        <dbReference type="ChEBI" id="CHEBI:18420"/>
    </cofactor>
    <text evidence="1">Binds 1 Mg(2+) ion per subunit.</text>
</comment>
<comment type="pathway">
    <text evidence="1">Purine metabolism; AMP biosynthesis via de novo pathway; AMP from IMP: step 1/2.</text>
</comment>
<comment type="subunit">
    <text evidence="1">Homodimer.</text>
</comment>
<comment type="subcellular location">
    <subcellularLocation>
        <location evidence="1">Cytoplasm</location>
    </subcellularLocation>
</comment>
<comment type="similarity">
    <text evidence="1">Belongs to the adenylosuccinate synthetase family.</text>
</comment>